<feature type="chain" id="PRO_1000094434" description="Shikimate kinase">
    <location>
        <begin position="1"/>
        <end position="180"/>
    </location>
</feature>
<feature type="binding site" evidence="1">
    <location>
        <begin position="14"/>
        <end position="19"/>
    </location>
    <ligand>
        <name>ATP</name>
        <dbReference type="ChEBI" id="CHEBI:30616"/>
    </ligand>
</feature>
<feature type="binding site" evidence="1">
    <location>
        <position position="18"/>
    </location>
    <ligand>
        <name>Mg(2+)</name>
        <dbReference type="ChEBI" id="CHEBI:18420"/>
    </ligand>
</feature>
<feature type="binding site" evidence="1">
    <location>
        <position position="36"/>
    </location>
    <ligand>
        <name>substrate</name>
    </ligand>
</feature>
<feature type="binding site" evidence="1">
    <location>
        <position position="60"/>
    </location>
    <ligand>
        <name>substrate</name>
    </ligand>
</feature>
<feature type="binding site" evidence="1">
    <location>
        <position position="82"/>
    </location>
    <ligand>
        <name>substrate</name>
    </ligand>
</feature>
<feature type="binding site" evidence="1">
    <location>
        <position position="120"/>
    </location>
    <ligand>
        <name>ATP</name>
        <dbReference type="ChEBI" id="CHEBI:30616"/>
    </ligand>
</feature>
<feature type="binding site" evidence="1">
    <location>
        <position position="139"/>
    </location>
    <ligand>
        <name>substrate</name>
    </ligand>
</feature>
<proteinExistence type="inferred from homology"/>
<reference key="1">
    <citation type="journal article" date="2010" name="J. Bacteriol.">
        <title>Whole genome sequences of two Xylella fastidiosa strains (M12 and M23) causing almond leaf scorch disease in California.</title>
        <authorList>
            <person name="Chen J."/>
            <person name="Xie G."/>
            <person name="Han S."/>
            <person name="Chertkov O."/>
            <person name="Sims D."/>
            <person name="Civerolo E.L."/>
        </authorList>
    </citation>
    <scope>NUCLEOTIDE SEQUENCE [LARGE SCALE GENOMIC DNA]</scope>
    <source>
        <strain>M12</strain>
    </source>
</reference>
<evidence type="ECO:0000255" key="1">
    <source>
        <dbReference type="HAMAP-Rule" id="MF_00109"/>
    </source>
</evidence>
<sequence length="180" mass="20450">MNPAPNLVMIGPMGAGKSSIGRRIAKHFNLHFADTDHAIVERAGTSISTIFKYSGEPEFRRLEREVLHDLLNHENRLIATGGGTILDPENRHRMQKRGFVVFLKINVNTQLERLAHDRYRPLLQQTDRKQVLSDLYATRQPLYQKIADMIVTTDHMSPNTATAQLILDLTAHWQKSSNTA</sequence>
<organism>
    <name type="scientific">Xylella fastidiosa (strain M12)</name>
    <dbReference type="NCBI Taxonomy" id="405440"/>
    <lineage>
        <taxon>Bacteria</taxon>
        <taxon>Pseudomonadati</taxon>
        <taxon>Pseudomonadota</taxon>
        <taxon>Gammaproteobacteria</taxon>
        <taxon>Lysobacterales</taxon>
        <taxon>Lysobacteraceae</taxon>
        <taxon>Xylella</taxon>
    </lineage>
</organism>
<protein>
    <recommendedName>
        <fullName evidence="1">Shikimate kinase</fullName>
        <shortName evidence="1">SK</shortName>
        <ecNumber evidence="1">2.7.1.71</ecNumber>
    </recommendedName>
</protein>
<dbReference type="EC" id="2.7.1.71" evidence="1"/>
<dbReference type="EMBL" id="CP000941">
    <property type="protein sequence ID" value="ACA11690.1"/>
    <property type="molecule type" value="Genomic_DNA"/>
</dbReference>
<dbReference type="RefSeq" id="WP_012337743.1">
    <property type="nucleotide sequence ID" value="NC_010513.1"/>
</dbReference>
<dbReference type="SMR" id="B0U6C8"/>
<dbReference type="KEGG" id="xfm:Xfasm12_0692"/>
<dbReference type="HOGENOM" id="CLU_057607_3_2_6"/>
<dbReference type="UniPathway" id="UPA00053">
    <property type="reaction ID" value="UER00088"/>
</dbReference>
<dbReference type="GO" id="GO:0005829">
    <property type="term" value="C:cytosol"/>
    <property type="evidence" value="ECO:0007669"/>
    <property type="project" value="TreeGrafter"/>
</dbReference>
<dbReference type="GO" id="GO:0005524">
    <property type="term" value="F:ATP binding"/>
    <property type="evidence" value="ECO:0007669"/>
    <property type="project" value="UniProtKB-UniRule"/>
</dbReference>
<dbReference type="GO" id="GO:0000287">
    <property type="term" value="F:magnesium ion binding"/>
    <property type="evidence" value="ECO:0007669"/>
    <property type="project" value="UniProtKB-UniRule"/>
</dbReference>
<dbReference type="GO" id="GO:0004765">
    <property type="term" value="F:shikimate kinase activity"/>
    <property type="evidence" value="ECO:0007669"/>
    <property type="project" value="UniProtKB-UniRule"/>
</dbReference>
<dbReference type="GO" id="GO:0008652">
    <property type="term" value="P:amino acid biosynthetic process"/>
    <property type="evidence" value="ECO:0007669"/>
    <property type="project" value="UniProtKB-KW"/>
</dbReference>
<dbReference type="GO" id="GO:0009073">
    <property type="term" value="P:aromatic amino acid family biosynthetic process"/>
    <property type="evidence" value="ECO:0007669"/>
    <property type="project" value="UniProtKB-KW"/>
</dbReference>
<dbReference type="GO" id="GO:0009423">
    <property type="term" value="P:chorismate biosynthetic process"/>
    <property type="evidence" value="ECO:0007669"/>
    <property type="project" value="UniProtKB-UniRule"/>
</dbReference>
<dbReference type="CDD" id="cd00464">
    <property type="entry name" value="SK"/>
    <property type="match status" value="1"/>
</dbReference>
<dbReference type="Gene3D" id="3.40.50.300">
    <property type="entry name" value="P-loop containing nucleotide triphosphate hydrolases"/>
    <property type="match status" value="1"/>
</dbReference>
<dbReference type="HAMAP" id="MF_00109">
    <property type="entry name" value="Shikimate_kinase"/>
    <property type="match status" value="1"/>
</dbReference>
<dbReference type="InterPro" id="IPR027417">
    <property type="entry name" value="P-loop_NTPase"/>
</dbReference>
<dbReference type="InterPro" id="IPR031322">
    <property type="entry name" value="Shikimate/glucono_kinase"/>
</dbReference>
<dbReference type="InterPro" id="IPR000623">
    <property type="entry name" value="Shikimate_kinase/TSH1"/>
</dbReference>
<dbReference type="InterPro" id="IPR023000">
    <property type="entry name" value="Shikimate_kinase_CS"/>
</dbReference>
<dbReference type="PANTHER" id="PTHR21087">
    <property type="entry name" value="SHIKIMATE KINASE"/>
    <property type="match status" value="1"/>
</dbReference>
<dbReference type="PANTHER" id="PTHR21087:SF16">
    <property type="entry name" value="SHIKIMATE KINASE 1, CHLOROPLASTIC"/>
    <property type="match status" value="1"/>
</dbReference>
<dbReference type="Pfam" id="PF01202">
    <property type="entry name" value="SKI"/>
    <property type="match status" value="1"/>
</dbReference>
<dbReference type="PRINTS" id="PR01100">
    <property type="entry name" value="SHIKIMTKNASE"/>
</dbReference>
<dbReference type="SUPFAM" id="SSF52540">
    <property type="entry name" value="P-loop containing nucleoside triphosphate hydrolases"/>
    <property type="match status" value="1"/>
</dbReference>
<dbReference type="PROSITE" id="PS01128">
    <property type="entry name" value="SHIKIMATE_KINASE"/>
    <property type="match status" value="1"/>
</dbReference>
<name>AROK_XYLFM</name>
<accession>B0U6C8</accession>
<comment type="function">
    <text evidence="1">Catalyzes the specific phosphorylation of the 3-hydroxyl group of shikimic acid using ATP as a cosubstrate.</text>
</comment>
<comment type="catalytic activity">
    <reaction evidence="1">
        <text>shikimate + ATP = 3-phosphoshikimate + ADP + H(+)</text>
        <dbReference type="Rhea" id="RHEA:13121"/>
        <dbReference type="ChEBI" id="CHEBI:15378"/>
        <dbReference type="ChEBI" id="CHEBI:30616"/>
        <dbReference type="ChEBI" id="CHEBI:36208"/>
        <dbReference type="ChEBI" id="CHEBI:145989"/>
        <dbReference type="ChEBI" id="CHEBI:456216"/>
        <dbReference type="EC" id="2.7.1.71"/>
    </reaction>
</comment>
<comment type="cofactor">
    <cofactor evidence="1">
        <name>Mg(2+)</name>
        <dbReference type="ChEBI" id="CHEBI:18420"/>
    </cofactor>
    <text evidence="1">Binds 1 Mg(2+) ion per subunit.</text>
</comment>
<comment type="pathway">
    <text evidence="1">Metabolic intermediate biosynthesis; chorismate biosynthesis; chorismate from D-erythrose 4-phosphate and phosphoenolpyruvate: step 5/7.</text>
</comment>
<comment type="subunit">
    <text evidence="1">Monomer.</text>
</comment>
<comment type="subcellular location">
    <subcellularLocation>
        <location evidence="1">Cytoplasm</location>
    </subcellularLocation>
</comment>
<comment type="similarity">
    <text evidence="1">Belongs to the shikimate kinase family.</text>
</comment>
<gene>
    <name evidence="1" type="primary">aroK</name>
    <name type="ordered locus">Xfasm12_0692</name>
</gene>
<keyword id="KW-0028">Amino-acid biosynthesis</keyword>
<keyword id="KW-0057">Aromatic amino acid biosynthesis</keyword>
<keyword id="KW-0067">ATP-binding</keyword>
<keyword id="KW-0963">Cytoplasm</keyword>
<keyword id="KW-0418">Kinase</keyword>
<keyword id="KW-0460">Magnesium</keyword>
<keyword id="KW-0479">Metal-binding</keyword>
<keyword id="KW-0547">Nucleotide-binding</keyword>
<keyword id="KW-0808">Transferase</keyword>